<reference key="1">
    <citation type="journal article" date="2002" name="Nature">
        <title>Genome sequence of the plant pathogen Ralstonia solanacearum.</title>
        <authorList>
            <person name="Salanoubat M."/>
            <person name="Genin S."/>
            <person name="Artiguenave F."/>
            <person name="Gouzy J."/>
            <person name="Mangenot S."/>
            <person name="Arlat M."/>
            <person name="Billault A."/>
            <person name="Brottier P."/>
            <person name="Camus J.-C."/>
            <person name="Cattolico L."/>
            <person name="Chandler M."/>
            <person name="Choisne N."/>
            <person name="Claudel-Renard C."/>
            <person name="Cunnac S."/>
            <person name="Demange N."/>
            <person name="Gaspin C."/>
            <person name="Lavie M."/>
            <person name="Moisan A."/>
            <person name="Robert C."/>
            <person name="Saurin W."/>
            <person name="Schiex T."/>
            <person name="Siguier P."/>
            <person name="Thebault P."/>
            <person name="Whalen M."/>
            <person name="Wincker P."/>
            <person name="Levy M."/>
            <person name="Weissenbach J."/>
            <person name="Boucher C.A."/>
        </authorList>
    </citation>
    <scope>NUCLEOTIDE SEQUENCE [LARGE SCALE GENOMIC DNA]</scope>
    <source>
        <strain>ATCC BAA-1114 / GMI1000</strain>
    </source>
</reference>
<keyword id="KW-1185">Reference proteome</keyword>
<keyword id="KW-0678">Repressor</keyword>
<keyword id="KW-0687">Ribonucleoprotein</keyword>
<keyword id="KW-0689">Ribosomal protein</keyword>
<keyword id="KW-0694">RNA-binding</keyword>
<keyword id="KW-0699">rRNA-binding</keyword>
<keyword id="KW-0810">Translation regulation</keyword>
<keyword id="KW-0820">tRNA-binding</keyword>
<organism>
    <name type="scientific">Ralstonia nicotianae (strain ATCC BAA-1114 / GMI1000)</name>
    <name type="common">Ralstonia solanacearum</name>
    <dbReference type="NCBI Taxonomy" id="267608"/>
    <lineage>
        <taxon>Bacteria</taxon>
        <taxon>Pseudomonadati</taxon>
        <taxon>Pseudomonadota</taxon>
        <taxon>Betaproteobacteria</taxon>
        <taxon>Burkholderiales</taxon>
        <taxon>Burkholderiaceae</taxon>
        <taxon>Ralstonia</taxon>
        <taxon>Ralstonia solanacearum species complex</taxon>
    </lineage>
</organism>
<sequence length="231" mass="24070">MAKISKRVAANKAKVERTKFYPIDEALSLVKECASAKFDESIDVAVQLGIDAKKSDQVVRGSVVLPAGTGKSVRVAVFAQGEKAEQAKAAGAEIVGMEDLAEQIKAGNMDFDVVIASPDTMRVVGTLGQILGPRGLMPNPKVGTVTPDVATAVKNAKAGQVQFRVDKAGIIHATIGRRSFEPAALKSNLAALLDALSKAKPASSKGVYLRKIAVSSTMGVGVRIDQATLSA</sequence>
<dbReference type="EMBL" id="AL646052">
    <property type="protein sequence ID" value="CAD16746.1"/>
    <property type="molecule type" value="Genomic_DNA"/>
</dbReference>
<dbReference type="RefSeq" id="WP_011002932.1">
    <property type="nucleotide sequence ID" value="NC_003295.1"/>
</dbReference>
<dbReference type="SMR" id="Q8XUZ5"/>
<dbReference type="STRING" id="267608.RSc3037"/>
<dbReference type="EnsemblBacteria" id="CAD16746">
    <property type="protein sequence ID" value="CAD16746"/>
    <property type="gene ID" value="RSc3037"/>
</dbReference>
<dbReference type="KEGG" id="rso:RSc3037"/>
<dbReference type="eggNOG" id="COG0081">
    <property type="taxonomic scope" value="Bacteria"/>
</dbReference>
<dbReference type="HOGENOM" id="CLU_062853_0_0_4"/>
<dbReference type="Proteomes" id="UP000001436">
    <property type="component" value="Chromosome"/>
</dbReference>
<dbReference type="GO" id="GO:0022625">
    <property type="term" value="C:cytosolic large ribosomal subunit"/>
    <property type="evidence" value="ECO:0007669"/>
    <property type="project" value="TreeGrafter"/>
</dbReference>
<dbReference type="GO" id="GO:0019843">
    <property type="term" value="F:rRNA binding"/>
    <property type="evidence" value="ECO:0007669"/>
    <property type="project" value="UniProtKB-UniRule"/>
</dbReference>
<dbReference type="GO" id="GO:0003735">
    <property type="term" value="F:structural constituent of ribosome"/>
    <property type="evidence" value="ECO:0007669"/>
    <property type="project" value="InterPro"/>
</dbReference>
<dbReference type="GO" id="GO:0000049">
    <property type="term" value="F:tRNA binding"/>
    <property type="evidence" value="ECO:0007669"/>
    <property type="project" value="UniProtKB-KW"/>
</dbReference>
<dbReference type="GO" id="GO:0006417">
    <property type="term" value="P:regulation of translation"/>
    <property type="evidence" value="ECO:0007669"/>
    <property type="project" value="UniProtKB-KW"/>
</dbReference>
<dbReference type="GO" id="GO:0006412">
    <property type="term" value="P:translation"/>
    <property type="evidence" value="ECO:0007669"/>
    <property type="project" value="UniProtKB-UniRule"/>
</dbReference>
<dbReference type="CDD" id="cd00403">
    <property type="entry name" value="Ribosomal_L1"/>
    <property type="match status" value="1"/>
</dbReference>
<dbReference type="FunFam" id="3.40.50.790:FF:000001">
    <property type="entry name" value="50S ribosomal protein L1"/>
    <property type="match status" value="1"/>
</dbReference>
<dbReference type="Gene3D" id="3.30.190.20">
    <property type="match status" value="1"/>
</dbReference>
<dbReference type="Gene3D" id="3.40.50.790">
    <property type="match status" value="1"/>
</dbReference>
<dbReference type="HAMAP" id="MF_01318_B">
    <property type="entry name" value="Ribosomal_uL1_B"/>
    <property type="match status" value="1"/>
</dbReference>
<dbReference type="InterPro" id="IPR005878">
    <property type="entry name" value="Ribosom_uL1_bac-type"/>
</dbReference>
<dbReference type="InterPro" id="IPR002143">
    <property type="entry name" value="Ribosomal_uL1"/>
</dbReference>
<dbReference type="InterPro" id="IPR023674">
    <property type="entry name" value="Ribosomal_uL1-like"/>
</dbReference>
<dbReference type="InterPro" id="IPR028364">
    <property type="entry name" value="Ribosomal_uL1/biogenesis"/>
</dbReference>
<dbReference type="InterPro" id="IPR016095">
    <property type="entry name" value="Ribosomal_uL1_3-a/b-sand"/>
</dbReference>
<dbReference type="InterPro" id="IPR023673">
    <property type="entry name" value="Ribosomal_uL1_CS"/>
</dbReference>
<dbReference type="NCBIfam" id="TIGR01169">
    <property type="entry name" value="rplA_bact"/>
    <property type="match status" value="1"/>
</dbReference>
<dbReference type="PANTHER" id="PTHR36427">
    <property type="entry name" value="54S RIBOSOMAL PROTEIN L1, MITOCHONDRIAL"/>
    <property type="match status" value="1"/>
</dbReference>
<dbReference type="PANTHER" id="PTHR36427:SF3">
    <property type="entry name" value="LARGE RIBOSOMAL SUBUNIT PROTEIN UL1M"/>
    <property type="match status" value="1"/>
</dbReference>
<dbReference type="Pfam" id="PF00687">
    <property type="entry name" value="Ribosomal_L1"/>
    <property type="match status" value="1"/>
</dbReference>
<dbReference type="PIRSF" id="PIRSF002155">
    <property type="entry name" value="Ribosomal_L1"/>
    <property type="match status" value="1"/>
</dbReference>
<dbReference type="SUPFAM" id="SSF56808">
    <property type="entry name" value="Ribosomal protein L1"/>
    <property type="match status" value="1"/>
</dbReference>
<dbReference type="PROSITE" id="PS01199">
    <property type="entry name" value="RIBOSOMAL_L1"/>
    <property type="match status" value="1"/>
</dbReference>
<gene>
    <name evidence="1" type="primary">rplA</name>
    <name type="ordered locus">RSc3037</name>
    <name type="ORF">RS04720</name>
</gene>
<feature type="chain" id="PRO_0000125717" description="Large ribosomal subunit protein uL1">
    <location>
        <begin position="1"/>
        <end position="231"/>
    </location>
</feature>
<comment type="function">
    <text evidence="1">Binds directly to 23S rRNA. The L1 stalk is quite mobile in the ribosome, and is involved in E site tRNA release.</text>
</comment>
<comment type="function">
    <text evidence="1">Protein L1 is also a translational repressor protein, it controls the translation of the L11 operon by binding to its mRNA.</text>
</comment>
<comment type="subunit">
    <text evidence="1">Part of the 50S ribosomal subunit.</text>
</comment>
<comment type="similarity">
    <text evidence="1">Belongs to the universal ribosomal protein uL1 family.</text>
</comment>
<protein>
    <recommendedName>
        <fullName evidence="1">Large ribosomal subunit protein uL1</fullName>
    </recommendedName>
    <alternativeName>
        <fullName evidence="2">50S ribosomal protein L1</fullName>
    </alternativeName>
</protein>
<proteinExistence type="inferred from homology"/>
<name>RL1_RALN1</name>
<accession>Q8XUZ5</accession>
<evidence type="ECO:0000255" key="1">
    <source>
        <dbReference type="HAMAP-Rule" id="MF_01318"/>
    </source>
</evidence>
<evidence type="ECO:0000305" key="2"/>